<proteinExistence type="inferred from homology"/>
<name>YJJB_ECO27</name>
<reference key="1">
    <citation type="journal article" date="2009" name="J. Bacteriol.">
        <title>Complete genome sequence and comparative genome analysis of enteropathogenic Escherichia coli O127:H6 strain E2348/69.</title>
        <authorList>
            <person name="Iguchi A."/>
            <person name="Thomson N.R."/>
            <person name="Ogura Y."/>
            <person name="Saunders D."/>
            <person name="Ooka T."/>
            <person name="Henderson I.R."/>
            <person name="Harris D."/>
            <person name="Asadulghani M."/>
            <person name="Kurokawa K."/>
            <person name="Dean P."/>
            <person name="Kenny B."/>
            <person name="Quail M.A."/>
            <person name="Thurston S."/>
            <person name="Dougan G."/>
            <person name="Hayashi T."/>
            <person name="Parkhill J."/>
            <person name="Frankel G."/>
        </authorList>
    </citation>
    <scope>NUCLEOTIDE SEQUENCE [LARGE SCALE GENOMIC DNA]</scope>
    <source>
        <strain>E2348/69 / EPEC</strain>
    </source>
</reference>
<protein>
    <recommendedName>
        <fullName evidence="1">Probable succinate transporter subunit YjjB</fullName>
    </recommendedName>
</protein>
<feature type="chain" id="PRO_1000164499" description="Probable succinate transporter subunit YjjB">
    <location>
        <begin position="1"/>
        <end position="157"/>
    </location>
</feature>
<feature type="transmembrane region" description="Helical" evidence="1">
    <location>
        <begin position="8"/>
        <end position="28"/>
    </location>
</feature>
<feature type="transmembrane region" description="Helical" evidence="1">
    <location>
        <begin position="50"/>
        <end position="70"/>
    </location>
</feature>
<feature type="transmembrane region" description="Helical" evidence="1">
    <location>
        <begin position="87"/>
        <end position="107"/>
    </location>
</feature>
<feature type="transmembrane region" description="Helical" evidence="1">
    <location>
        <begin position="129"/>
        <end position="149"/>
    </location>
</feature>
<organism>
    <name type="scientific">Escherichia coli O127:H6 (strain E2348/69 / EPEC)</name>
    <dbReference type="NCBI Taxonomy" id="574521"/>
    <lineage>
        <taxon>Bacteria</taxon>
        <taxon>Pseudomonadati</taxon>
        <taxon>Pseudomonadota</taxon>
        <taxon>Gammaproteobacteria</taxon>
        <taxon>Enterobacterales</taxon>
        <taxon>Enterobacteriaceae</taxon>
        <taxon>Escherichia</taxon>
    </lineage>
</organism>
<accession>B7UQZ2</accession>
<keyword id="KW-0997">Cell inner membrane</keyword>
<keyword id="KW-1003">Cell membrane</keyword>
<keyword id="KW-0472">Membrane</keyword>
<keyword id="KW-1185">Reference proteome</keyword>
<keyword id="KW-0812">Transmembrane</keyword>
<keyword id="KW-1133">Transmembrane helix</keyword>
<keyword id="KW-0813">Transport</keyword>
<sequence length="157" mass="17047">MGVIEFLLALAQDMILAAIPAVGFAMVFNVPVRALRWCALLGSIGHGSRMILMTSGLNIEWSTFMASMLVGTIGIQWSRWYLAHPKVFTVAAVIPMFPGISAYTAMISAVKISQLGYSEPLMITLLTNFLTASSIVGALSIGLSIPGLWLYRKRPRV</sequence>
<comment type="function">
    <text evidence="1">Involved in succinate export with YjjP. Both proteins are required for export.</text>
</comment>
<comment type="subunit">
    <text evidence="1">The transporter is composed of YjjB and YjjP.</text>
</comment>
<comment type="subcellular location">
    <subcellularLocation>
        <location evidence="1">Cell inner membrane</location>
        <topology evidence="1">Multi-pass membrane protein</topology>
    </subcellularLocation>
</comment>
<comment type="similarity">
    <text evidence="1">Belongs to the ThrE exporter (TC 2.A.79) family.</text>
</comment>
<evidence type="ECO:0000255" key="1">
    <source>
        <dbReference type="HAMAP-Rule" id="MF_01191"/>
    </source>
</evidence>
<dbReference type="EMBL" id="FM180568">
    <property type="protein sequence ID" value="CAS12210.1"/>
    <property type="molecule type" value="Genomic_DNA"/>
</dbReference>
<dbReference type="RefSeq" id="WP_000538191.1">
    <property type="nucleotide sequence ID" value="NC_011601.1"/>
</dbReference>
<dbReference type="KEGG" id="ecg:E2348C_4662"/>
<dbReference type="HOGENOM" id="CLU_117642_1_0_6"/>
<dbReference type="Proteomes" id="UP000008205">
    <property type="component" value="Chromosome"/>
</dbReference>
<dbReference type="GO" id="GO:0005886">
    <property type="term" value="C:plasma membrane"/>
    <property type="evidence" value="ECO:0007669"/>
    <property type="project" value="UniProtKB-SubCell"/>
</dbReference>
<dbReference type="GO" id="GO:0015744">
    <property type="term" value="P:succinate transport"/>
    <property type="evidence" value="ECO:0007669"/>
    <property type="project" value="UniProtKB-UniRule"/>
</dbReference>
<dbReference type="HAMAP" id="MF_01191">
    <property type="entry name" value="YjjB"/>
    <property type="match status" value="1"/>
</dbReference>
<dbReference type="InterPro" id="IPR024528">
    <property type="entry name" value="ThrE_2"/>
</dbReference>
<dbReference type="InterPro" id="IPR050539">
    <property type="entry name" value="ThrE_Dicarb/AminoAcid_Exp"/>
</dbReference>
<dbReference type="InterPro" id="IPR020914">
    <property type="entry name" value="YjjB"/>
</dbReference>
<dbReference type="NCBIfam" id="NF007391">
    <property type="entry name" value="PRK09917.1"/>
    <property type="match status" value="1"/>
</dbReference>
<dbReference type="PANTHER" id="PTHR34390:SF1">
    <property type="entry name" value="SUCCINATE TRANSPORTER SUBUNIT YJJB-RELATED"/>
    <property type="match status" value="1"/>
</dbReference>
<dbReference type="PANTHER" id="PTHR34390">
    <property type="entry name" value="UPF0442 PROTEIN YJJB-RELATED"/>
    <property type="match status" value="1"/>
</dbReference>
<dbReference type="Pfam" id="PF12821">
    <property type="entry name" value="ThrE_2"/>
    <property type="match status" value="1"/>
</dbReference>
<gene>
    <name evidence="1" type="primary">yjjB</name>
    <name type="ordered locus">E2348C_4662</name>
</gene>